<proteinExistence type="inferred from homology"/>
<reference key="1">
    <citation type="submission" date="2009-01" db="EMBL/GenBank/DDBJ databases">
        <title>Complete sequence of chromosome of Caldicellulosiruptor becscii DSM 6725.</title>
        <authorList>
            <person name="Lucas S."/>
            <person name="Copeland A."/>
            <person name="Lapidus A."/>
            <person name="Glavina del Rio T."/>
            <person name="Tice H."/>
            <person name="Bruce D."/>
            <person name="Goodwin L."/>
            <person name="Pitluck S."/>
            <person name="Sims D."/>
            <person name="Meincke L."/>
            <person name="Brettin T."/>
            <person name="Detter J.C."/>
            <person name="Han C."/>
            <person name="Larimer F."/>
            <person name="Land M."/>
            <person name="Hauser L."/>
            <person name="Kyrpides N."/>
            <person name="Ovchinnikova G."/>
            <person name="Kataeva I."/>
            <person name="Adams M.W.W."/>
        </authorList>
    </citation>
    <scope>NUCLEOTIDE SEQUENCE [LARGE SCALE GENOMIC DNA]</scope>
    <source>
        <strain>ATCC BAA-1888 / DSM 6725 / KCTC 15123 / Z-1320</strain>
    </source>
</reference>
<evidence type="ECO:0000255" key="1">
    <source>
        <dbReference type="HAMAP-Rule" id="MF_00658"/>
    </source>
</evidence>
<feature type="chain" id="PRO_1000199808" description="Ribosomal RNA large subunit methyltransferase H">
    <location>
        <begin position="1"/>
        <end position="154"/>
    </location>
</feature>
<feature type="binding site" evidence="1">
    <location>
        <position position="103"/>
    </location>
    <ligand>
        <name>S-adenosyl-L-methionine</name>
        <dbReference type="ChEBI" id="CHEBI:59789"/>
    </ligand>
</feature>
<feature type="binding site" evidence="1">
    <location>
        <begin position="122"/>
        <end position="127"/>
    </location>
    <ligand>
        <name>S-adenosyl-L-methionine</name>
        <dbReference type="ChEBI" id="CHEBI:59789"/>
    </ligand>
</feature>
<protein>
    <recommendedName>
        <fullName evidence="1">Ribosomal RNA large subunit methyltransferase H</fullName>
        <ecNumber evidence="1">2.1.1.177</ecNumber>
    </recommendedName>
    <alternativeName>
        <fullName evidence="1">23S rRNA (pseudouridine1915-N3)-methyltransferase</fullName>
    </alternativeName>
    <alternativeName>
        <fullName evidence="1">23S rRNA m3Psi1915 methyltransferase</fullName>
    </alternativeName>
    <alternativeName>
        <fullName evidence="1">rRNA (pseudouridine-N3-)-methyltransferase RlmH</fullName>
    </alternativeName>
</protein>
<accession>B9MR74</accession>
<name>RLMH_CALBD</name>
<organism>
    <name type="scientific">Caldicellulosiruptor bescii (strain ATCC BAA-1888 / DSM 6725 / KCTC 15123 / Z-1320)</name>
    <name type="common">Anaerocellum thermophilum</name>
    <dbReference type="NCBI Taxonomy" id="521460"/>
    <lineage>
        <taxon>Bacteria</taxon>
        <taxon>Bacillati</taxon>
        <taxon>Bacillota</taxon>
        <taxon>Bacillota incertae sedis</taxon>
        <taxon>Caldicellulosiruptorales</taxon>
        <taxon>Caldicellulosiruptoraceae</taxon>
        <taxon>Caldicellulosiruptor</taxon>
    </lineage>
</organism>
<comment type="function">
    <text evidence="1">Specifically methylates the pseudouridine at position 1915 (m3Psi1915) in 23S rRNA.</text>
</comment>
<comment type="catalytic activity">
    <reaction evidence="1">
        <text>pseudouridine(1915) in 23S rRNA + S-adenosyl-L-methionine = N(3)-methylpseudouridine(1915) in 23S rRNA + S-adenosyl-L-homocysteine + H(+)</text>
        <dbReference type="Rhea" id="RHEA:42752"/>
        <dbReference type="Rhea" id="RHEA-COMP:10221"/>
        <dbReference type="Rhea" id="RHEA-COMP:10222"/>
        <dbReference type="ChEBI" id="CHEBI:15378"/>
        <dbReference type="ChEBI" id="CHEBI:57856"/>
        <dbReference type="ChEBI" id="CHEBI:59789"/>
        <dbReference type="ChEBI" id="CHEBI:65314"/>
        <dbReference type="ChEBI" id="CHEBI:74486"/>
        <dbReference type="EC" id="2.1.1.177"/>
    </reaction>
</comment>
<comment type="subunit">
    <text evidence="1">Homodimer.</text>
</comment>
<comment type="subcellular location">
    <subcellularLocation>
        <location evidence="1">Cytoplasm</location>
    </subcellularLocation>
</comment>
<comment type="similarity">
    <text evidence="1">Belongs to the RNA methyltransferase RlmH family.</text>
</comment>
<sequence>MIKIISVGTIKEKYFLQACEEYKKRLSRWVKVEEIEIKEEDENKYFNIETLLEKEADKILKHVKEGEFIIVCDINGIELSSEEFSEILRKNINSSKNITFIIGSSNGLSNEVKRRADLLLSFSKLTFPHQLFRVLLYEQIYRGLSIIYGTKYHK</sequence>
<gene>
    <name evidence="1" type="primary">rlmH</name>
    <name type="ordered locus">Athe_1077</name>
</gene>
<keyword id="KW-0963">Cytoplasm</keyword>
<keyword id="KW-0489">Methyltransferase</keyword>
<keyword id="KW-0698">rRNA processing</keyword>
<keyword id="KW-0949">S-adenosyl-L-methionine</keyword>
<keyword id="KW-0808">Transferase</keyword>
<dbReference type="EC" id="2.1.1.177" evidence="1"/>
<dbReference type="EMBL" id="CP001393">
    <property type="protein sequence ID" value="ACM60178.1"/>
    <property type="molecule type" value="Genomic_DNA"/>
</dbReference>
<dbReference type="RefSeq" id="WP_015907587.1">
    <property type="nucleotide sequence ID" value="NC_012034.1"/>
</dbReference>
<dbReference type="SMR" id="B9MR74"/>
<dbReference type="STRING" id="521460.Athe_1077"/>
<dbReference type="GeneID" id="31772428"/>
<dbReference type="KEGG" id="ate:Athe_1077"/>
<dbReference type="eggNOG" id="COG1576">
    <property type="taxonomic scope" value="Bacteria"/>
</dbReference>
<dbReference type="HOGENOM" id="CLU_100552_0_0_9"/>
<dbReference type="Proteomes" id="UP000007723">
    <property type="component" value="Chromosome"/>
</dbReference>
<dbReference type="GO" id="GO:0005737">
    <property type="term" value="C:cytoplasm"/>
    <property type="evidence" value="ECO:0007669"/>
    <property type="project" value="UniProtKB-SubCell"/>
</dbReference>
<dbReference type="GO" id="GO:0070038">
    <property type="term" value="F:rRNA (pseudouridine-N3-)-methyltransferase activity"/>
    <property type="evidence" value="ECO:0007669"/>
    <property type="project" value="UniProtKB-UniRule"/>
</dbReference>
<dbReference type="CDD" id="cd18081">
    <property type="entry name" value="RlmH-like"/>
    <property type="match status" value="1"/>
</dbReference>
<dbReference type="Gene3D" id="3.40.1280.10">
    <property type="match status" value="1"/>
</dbReference>
<dbReference type="HAMAP" id="MF_00658">
    <property type="entry name" value="23SrRNA_methyltr_H"/>
    <property type="match status" value="1"/>
</dbReference>
<dbReference type="InterPro" id="IPR029028">
    <property type="entry name" value="Alpha/beta_knot_MTases"/>
</dbReference>
<dbReference type="InterPro" id="IPR003742">
    <property type="entry name" value="RlmH-like"/>
</dbReference>
<dbReference type="InterPro" id="IPR029026">
    <property type="entry name" value="tRNA_m1G_MTases_N"/>
</dbReference>
<dbReference type="PANTHER" id="PTHR33603">
    <property type="entry name" value="METHYLTRANSFERASE"/>
    <property type="match status" value="1"/>
</dbReference>
<dbReference type="PANTHER" id="PTHR33603:SF1">
    <property type="entry name" value="RIBOSOMAL RNA LARGE SUBUNIT METHYLTRANSFERASE H"/>
    <property type="match status" value="1"/>
</dbReference>
<dbReference type="Pfam" id="PF02590">
    <property type="entry name" value="SPOUT_MTase"/>
    <property type="match status" value="1"/>
</dbReference>
<dbReference type="PIRSF" id="PIRSF004505">
    <property type="entry name" value="MT_bac"/>
    <property type="match status" value="1"/>
</dbReference>
<dbReference type="SUPFAM" id="SSF75217">
    <property type="entry name" value="alpha/beta knot"/>
    <property type="match status" value="1"/>
</dbReference>